<organism>
    <name type="scientific">Helicobacter hepaticus (strain ATCC 51449 / 3B1)</name>
    <dbReference type="NCBI Taxonomy" id="235279"/>
    <lineage>
        <taxon>Bacteria</taxon>
        <taxon>Pseudomonadati</taxon>
        <taxon>Campylobacterota</taxon>
        <taxon>Epsilonproteobacteria</taxon>
        <taxon>Campylobacterales</taxon>
        <taxon>Helicobacteraceae</taxon>
        <taxon>Helicobacter</taxon>
    </lineage>
</organism>
<protein>
    <recommendedName>
        <fullName evidence="2">Translation initiation factor IF-2</fullName>
    </recommendedName>
</protein>
<accession>Q7VHF6</accession>
<name>IF2_HELHP</name>
<reference key="1">
    <citation type="journal article" date="2003" name="Proc. Natl. Acad. Sci. U.S.A.">
        <title>The complete genome sequence of the carcinogenic bacterium Helicobacter hepaticus.</title>
        <authorList>
            <person name="Suerbaum S."/>
            <person name="Josenhans C."/>
            <person name="Sterzenbach T."/>
            <person name="Drescher B."/>
            <person name="Brandt P."/>
            <person name="Bell M."/>
            <person name="Droege M."/>
            <person name="Fartmann B."/>
            <person name="Fischer H.-P."/>
            <person name="Ge Z."/>
            <person name="Hoerster A."/>
            <person name="Holland R."/>
            <person name="Klein K."/>
            <person name="Koenig J."/>
            <person name="Macko L."/>
            <person name="Mendz G.L."/>
            <person name="Nyakatura G."/>
            <person name="Schauer D.B."/>
            <person name="Shen Z."/>
            <person name="Weber J."/>
            <person name="Frosch M."/>
            <person name="Fox J.G."/>
        </authorList>
    </citation>
    <scope>NUCLEOTIDE SEQUENCE [LARGE SCALE GENOMIC DNA]</scope>
    <source>
        <strain>ATCC 51449 / 3B1</strain>
    </source>
</reference>
<feature type="chain" id="PRO_0000137208" description="Translation initiation factor IF-2">
    <location>
        <begin position="1"/>
        <end position="882"/>
    </location>
</feature>
<feature type="domain" description="tr-type G">
    <location>
        <begin position="381"/>
        <end position="550"/>
    </location>
</feature>
<feature type="region of interest" description="Disordered" evidence="3">
    <location>
        <begin position="57"/>
        <end position="211"/>
    </location>
</feature>
<feature type="region of interest" description="G1" evidence="1">
    <location>
        <begin position="390"/>
        <end position="397"/>
    </location>
</feature>
<feature type="region of interest" description="G2" evidence="1">
    <location>
        <begin position="415"/>
        <end position="419"/>
    </location>
</feature>
<feature type="region of interest" description="G3" evidence="1">
    <location>
        <begin position="436"/>
        <end position="439"/>
    </location>
</feature>
<feature type="region of interest" description="G4" evidence="1">
    <location>
        <begin position="490"/>
        <end position="493"/>
    </location>
</feature>
<feature type="region of interest" description="G5" evidence="1">
    <location>
        <begin position="526"/>
        <end position="528"/>
    </location>
</feature>
<feature type="compositionally biased region" description="Basic and acidic residues" evidence="3">
    <location>
        <begin position="104"/>
        <end position="115"/>
    </location>
</feature>
<feature type="compositionally biased region" description="Basic residues" evidence="3">
    <location>
        <begin position="199"/>
        <end position="211"/>
    </location>
</feature>
<feature type="binding site" evidence="2">
    <location>
        <begin position="390"/>
        <end position="397"/>
    </location>
    <ligand>
        <name>GTP</name>
        <dbReference type="ChEBI" id="CHEBI:37565"/>
    </ligand>
</feature>
<feature type="binding site" evidence="2">
    <location>
        <begin position="436"/>
        <end position="440"/>
    </location>
    <ligand>
        <name>GTP</name>
        <dbReference type="ChEBI" id="CHEBI:37565"/>
    </ligand>
</feature>
<feature type="binding site" evidence="2">
    <location>
        <begin position="490"/>
        <end position="493"/>
    </location>
    <ligand>
        <name>GTP</name>
        <dbReference type="ChEBI" id="CHEBI:37565"/>
    </ligand>
</feature>
<evidence type="ECO:0000250" key="1"/>
<evidence type="ECO:0000255" key="2">
    <source>
        <dbReference type="HAMAP-Rule" id="MF_00100"/>
    </source>
</evidence>
<evidence type="ECO:0000256" key="3">
    <source>
        <dbReference type="SAM" id="MobiDB-lite"/>
    </source>
</evidence>
<dbReference type="EMBL" id="AE017125">
    <property type="protein sequence ID" value="AAP77608.1"/>
    <property type="molecule type" value="Genomic_DNA"/>
</dbReference>
<dbReference type="RefSeq" id="WP_011115851.1">
    <property type="nucleotide sequence ID" value="NC_004917.1"/>
</dbReference>
<dbReference type="SMR" id="Q7VHF6"/>
<dbReference type="STRING" id="235279.HH_1011"/>
<dbReference type="KEGG" id="hhe:HH_1011"/>
<dbReference type="eggNOG" id="COG0532">
    <property type="taxonomic scope" value="Bacteria"/>
</dbReference>
<dbReference type="HOGENOM" id="CLU_006301_4_1_7"/>
<dbReference type="OrthoDB" id="9811804at2"/>
<dbReference type="Proteomes" id="UP000002495">
    <property type="component" value="Chromosome"/>
</dbReference>
<dbReference type="GO" id="GO:0005829">
    <property type="term" value="C:cytosol"/>
    <property type="evidence" value="ECO:0007669"/>
    <property type="project" value="TreeGrafter"/>
</dbReference>
<dbReference type="GO" id="GO:0005525">
    <property type="term" value="F:GTP binding"/>
    <property type="evidence" value="ECO:0007669"/>
    <property type="project" value="UniProtKB-KW"/>
</dbReference>
<dbReference type="GO" id="GO:0003924">
    <property type="term" value="F:GTPase activity"/>
    <property type="evidence" value="ECO:0007669"/>
    <property type="project" value="UniProtKB-UniRule"/>
</dbReference>
<dbReference type="GO" id="GO:0003743">
    <property type="term" value="F:translation initiation factor activity"/>
    <property type="evidence" value="ECO:0007669"/>
    <property type="project" value="UniProtKB-UniRule"/>
</dbReference>
<dbReference type="CDD" id="cd01887">
    <property type="entry name" value="IF2_eIF5B"/>
    <property type="match status" value="1"/>
</dbReference>
<dbReference type="CDD" id="cd03702">
    <property type="entry name" value="IF2_mtIF2_II"/>
    <property type="match status" value="1"/>
</dbReference>
<dbReference type="CDD" id="cd03692">
    <property type="entry name" value="mtIF2_IVc"/>
    <property type="match status" value="1"/>
</dbReference>
<dbReference type="FunFam" id="2.40.30.10:FF:000008">
    <property type="entry name" value="Translation initiation factor IF-2"/>
    <property type="match status" value="1"/>
</dbReference>
<dbReference type="FunFam" id="2.40.30.10:FF:000054">
    <property type="entry name" value="Translation initiation factor IF-2"/>
    <property type="match status" value="1"/>
</dbReference>
<dbReference type="FunFam" id="3.40.50.10050:FF:000001">
    <property type="entry name" value="Translation initiation factor IF-2"/>
    <property type="match status" value="1"/>
</dbReference>
<dbReference type="FunFam" id="3.40.50.300:FF:000019">
    <property type="entry name" value="Translation initiation factor IF-2"/>
    <property type="match status" value="1"/>
</dbReference>
<dbReference type="Gene3D" id="1.10.10.2480">
    <property type="match status" value="1"/>
</dbReference>
<dbReference type="Gene3D" id="3.40.50.300">
    <property type="entry name" value="P-loop containing nucleotide triphosphate hydrolases"/>
    <property type="match status" value="1"/>
</dbReference>
<dbReference type="Gene3D" id="2.40.30.10">
    <property type="entry name" value="Translation factors"/>
    <property type="match status" value="2"/>
</dbReference>
<dbReference type="Gene3D" id="3.40.50.10050">
    <property type="entry name" value="Translation initiation factor IF- 2, domain 3"/>
    <property type="match status" value="1"/>
</dbReference>
<dbReference type="HAMAP" id="MF_00100_B">
    <property type="entry name" value="IF_2_B"/>
    <property type="match status" value="1"/>
</dbReference>
<dbReference type="InterPro" id="IPR053905">
    <property type="entry name" value="EF-G-like_DII"/>
</dbReference>
<dbReference type="InterPro" id="IPR004161">
    <property type="entry name" value="EFTu-like_2"/>
</dbReference>
<dbReference type="InterPro" id="IPR044145">
    <property type="entry name" value="IF2_II"/>
</dbReference>
<dbReference type="InterPro" id="IPR006847">
    <property type="entry name" value="IF2_N"/>
</dbReference>
<dbReference type="InterPro" id="IPR027417">
    <property type="entry name" value="P-loop_NTPase"/>
</dbReference>
<dbReference type="InterPro" id="IPR005225">
    <property type="entry name" value="Small_GTP-bd"/>
</dbReference>
<dbReference type="InterPro" id="IPR000795">
    <property type="entry name" value="T_Tr_GTP-bd_dom"/>
</dbReference>
<dbReference type="InterPro" id="IPR000178">
    <property type="entry name" value="TF_IF2_bacterial-like"/>
</dbReference>
<dbReference type="InterPro" id="IPR015760">
    <property type="entry name" value="TIF_IF2"/>
</dbReference>
<dbReference type="InterPro" id="IPR023115">
    <property type="entry name" value="TIF_IF2_dom3"/>
</dbReference>
<dbReference type="InterPro" id="IPR036925">
    <property type="entry name" value="TIF_IF2_dom3_sf"/>
</dbReference>
<dbReference type="InterPro" id="IPR009000">
    <property type="entry name" value="Transl_B-barrel_sf"/>
</dbReference>
<dbReference type="NCBIfam" id="TIGR00487">
    <property type="entry name" value="IF-2"/>
    <property type="match status" value="1"/>
</dbReference>
<dbReference type="NCBIfam" id="TIGR00231">
    <property type="entry name" value="small_GTP"/>
    <property type="match status" value="1"/>
</dbReference>
<dbReference type="PANTHER" id="PTHR43381:SF5">
    <property type="entry name" value="TR-TYPE G DOMAIN-CONTAINING PROTEIN"/>
    <property type="match status" value="1"/>
</dbReference>
<dbReference type="PANTHER" id="PTHR43381">
    <property type="entry name" value="TRANSLATION INITIATION FACTOR IF-2-RELATED"/>
    <property type="match status" value="1"/>
</dbReference>
<dbReference type="Pfam" id="PF22042">
    <property type="entry name" value="EF-G_D2"/>
    <property type="match status" value="1"/>
</dbReference>
<dbReference type="Pfam" id="PF00009">
    <property type="entry name" value="GTP_EFTU"/>
    <property type="match status" value="1"/>
</dbReference>
<dbReference type="Pfam" id="PF03144">
    <property type="entry name" value="GTP_EFTU_D2"/>
    <property type="match status" value="1"/>
</dbReference>
<dbReference type="Pfam" id="PF11987">
    <property type="entry name" value="IF-2"/>
    <property type="match status" value="1"/>
</dbReference>
<dbReference type="Pfam" id="PF04760">
    <property type="entry name" value="IF2_N"/>
    <property type="match status" value="2"/>
</dbReference>
<dbReference type="SUPFAM" id="SSF52156">
    <property type="entry name" value="Initiation factor IF2/eIF5b, domain 3"/>
    <property type="match status" value="1"/>
</dbReference>
<dbReference type="SUPFAM" id="SSF52540">
    <property type="entry name" value="P-loop containing nucleoside triphosphate hydrolases"/>
    <property type="match status" value="1"/>
</dbReference>
<dbReference type="SUPFAM" id="SSF50447">
    <property type="entry name" value="Translation proteins"/>
    <property type="match status" value="2"/>
</dbReference>
<dbReference type="PROSITE" id="PS51722">
    <property type="entry name" value="G_TR_2"/>
    <property type="match status" value="1"/>
</dbReference>
<dbReference type="PROSITE" id="PS01176">
    <property type="entry name" value="IF2"/>
    <property type="match status" value="1"/>
</dbReference>
<sequence length="882" mass="97443">MEKIRLSDFAKEFGKEAKFAYEKAKEMGLSVKTPSSSLTQEEAAALFEYINTGVNSYIPANKTKDKKETKKPKKATTKTSQSAAKEKEIKKTTTTKAPKTAKKTTSEKQKDKGEQNEIEQDDAQFPAQAPQSKRASKKVESNDMTAPLETKAKVGLRIVRKNDTPQEQPSMVSKKDESKKHAPSYKELLADTADEEYKRHKKDKSKPKVATKHTDQKIHILDDRDISFHSDYDDEQDEIMLFDLNEREVRDEEEENQIRQAITERVHIHRKNPWMNEGSIKRGGKRRKPIKTTKNVDKIKGPISIPEEIRVYEFAELIKAELKDVIKVLFNLGVMATKNDFLDRDAIEILSDEFELEISIQDAPEQNIIESTPDIDSPLLERPPVVTIMGHVDHGKTSLLDYIRNSRIASGEAGGITQHIGAYMVEKNGKKISFIDTPGHEAFTQMRSRGAQVTDIAIIVIAADDGVKQQTIEALNHAKAANVQIIIAMNKMDKENANPDKLKAECAEIGFTPNEWGGEYEFIPISAKNGDGVENLLETILIQAEVLELKASHQGRAKAIVLEASLEKGRGPVATIIMQQGILNVGDSVVADTAFGRVRALLDDRGQNISQLSPSGVAVVTGLSEVPSAGAIFQSVENDTIAREHAQKRALYLRQKELSKSTKVTFDELGEMVAQGNLKTLPLIIKADTQGSLEAIKASLEKLSNDEVRINIIGFGVGGISESDITLCATSTNSLILGFNVRPTGSVKAKAKELGVEIKTYSIIYALLDDIKALLSGLMSPIVEEENTGQAEVRETFNIPKVGTIAGCMVVDGSIQRGIKVRLIRDGVVVHTGAISSLKRFKDDAKEVSKGYECGIMLENHNDIKVGDVFETYKEITKTKIL</sequence>
<proteinExistence type="inferred from homology"/>
<gene>
    <name evidence="2" type="primary">infB</name>
    <name type="ordered locus">HH_1011</name>
</gene>
<comment type="function">
    <text evidence="2">One of the essential components for the initiation of protein synthesis. Protects formylmethionyl-tRNA from spontaneous hydrolysis and promotes its binding to the 30S ribosomal subunits. Also involved in the hydrolysis of GTP during the formation of the 70S ribosomal complex.</text>
</comment>
<comment type="subcellular location">
    <subcellularLocation>
        <location evidence="2">Cytoplasm</location>
    </subcellularLocation>
</comment>
<comment type="similarity">
    <text evidence="2">Belongs to the TRAFAC class translation factor GTPase superfamily. Classic translation factor GTPase family. IF-2 subfamily.</text>
</comment>
<keyword id="KW-0963">Cytoplasm</keyword>
<keyword id="KW-0342">GTP-binding</keyword>
<keyword id="KW-0396">Initiation factor</keyword>
<keyword id="KW-0547">Nucleotide-binding</keyword>
<keyword id="KW-0648">Protein biosynthesis</keyword>
<keyword id="KW-1185">Reference proteome</keyword>